<organism>
    <name type="scientific">Bacillus cereus (strain B4264)</name>
    <dbReference type="NCBI Taxonomy" id="405532"/>
    <lineage>
        <taxon>Bacteria</taxon>
        <taxon>Bacillati</taxon>
        <taxon>Bacillota</taxon>
        <taxon>Bacilli</taxon>
        <taxon>Bacillales</taxon>
        <taxon>Bacillaceae</taxon>
        <taxon>Bacillus</taxon>
        <taxon>Bacillus cereus group</taxon>
    </lineage>
</organism>
<evidence type="ECO:0000255" key="1">
    <source>
        <dbReference type="HAMAP-Rule" id="MF_01325"/>
    </source>
</evidence>
<evidence type="ECO:0000256" key="2">
    <source>
        <dbReference type="SAM" id="MobiDB-lite"/>
    </source>
</evidence>
<evidence type="ECO:0000305" key="3"/>
<reference key="1">
    <citation type="submission" date="2008-10" db="EMBL/GenBank/DDBJ databases">
        <title>Genome sequence of Bacillus cereus B4264.</title>
        <authorList>
            <person name="Dodson R.J."/>
            <person name="Durkin A.S."/>
            <person name="Rosovitz M.J."/>
            <person name="Rasko D.A."/>
            <person name="Hoffmaster A."/>
            <person name="Ravel J."/>
            <person name="Sutton G."/>
        </authorList>
    </citation>
    <scope>NUCLEOTIDE SEQUENCE [LARGE SCALE GENOMIC DNA]</scope>
    <source>
        <strain>B4264</strain>
    </source>
</reference>
<accession>B7HJ48</accession>
<keyword id="KW-0687">Ribonucleoprotein</keyword>
<keyword id="KW-0689">Ribosomal protein</keyword>
<keyword id="KW-0694">RNA-binding</keyword>
<keyword id="KW-0699">rRNA-binding</keyword>
<proteinExistence type="inferred from homology"/>
<name>RL3_BACC4</name>
<protein>
    <recommendedName>
        <fullName evidence="1">Large ribosomal subunit protein uL3</fullName>
    </recommendedName>
    <alternativeName>
        <fullName evidence="3">50S ribosomal protein L3</fullName>
    </alternativeName>
</protein>
<comment type="function">
    <text evidence="1">One of the primary rRNA binding proteins, it binds directly near the 3'-end of the 23S rRNA, where it nucleates assembly of the 50S subunit.</text>
</comment>
<comment type="subunit">
    <text evidence="1">Part of the 50S ribosomal subunit. Forms a cluster with proteins L14 and L19.</text>
</comment>
<comment type="similarity">
    <text evidence="1">Belongs to the universal ribosomal protein uL3 family.</text>
</comment>
<sequence>MTKGILGRKIGMTQVFAENGELIPVTVIAANPNVVLQKKTTETDGYNAIQLGFEDKREKLTNKPEQGHTAKASTTPKRFIREIRDADVDGLEVGQEVKVDVFATGEIVDVTGISKGKGFQGVIKRHGQSRGPMSHGSRYHRRPGSMGPVAPNRVFKGKKLAGRMGGDQVTIQNLEIVQVDTERNLLLVKGNVPGAKKSLVVVQGAVKVSK</sequence>
<gene>
    <name evidence="1" type="primary">rplC</name>
    <name type="ordered locus">BCB4264_A0131</name>
</gene>
<feature type="chain" id="PRO_1000141824" description="Large ribosomal subunit protein uL3">
    <location>
        <begin position="1"/>
        <end position="210"/>
    </location>
</feature>
<feature type="region of interest" description="Disordered" evidence="2">
    <location>
        <begin position="125"/>
        <end position="151"/>
    </location>
</feature>
<dbReference type="EMBL" id="CP001176">
    <property type="protein sequence ID" value="ACK58703.1"/>
    <property type="molecule type" value="Genomic_DNA"/>
</dbReference>
<dbReference type="RefSeq" id="WP_000160207.1">
    <property type="nucleotide sequence ID" value="NZ_VEHB01000017.1"/>
</dbReference>
<dbReference type="SMR" id="B7HJ48"/>
<dbReference type="GeneID" id="93010943"/>
<dbReference type="KEGG" id="bcb:BCB4264_A0131"/>
<dbReference type="HOGENOM" id="CLU_044142_4_1_9"/>
<dbReference type="Proteomes" id="UP000007096">
    <property type="component" value="Chromosome"/>
</dbReference>
<dbReference type="GO" id="GO:0022625">
    <property type="term" value="C:cytosolic large ribosomal subunit"/>
    <property type="evidence" value="ECO:0007669"/>
    <property type="project" value="TreeGrafter"/>
</dbReference>
<dbReference type="GO" id="GO:0019843">
    <property type="term" value="F:rRNA binding"/>
    <property type="evidence" value="ECO:0007669"/>
    <property type="project" value="UniProtKB-UniRule"/>
</dbReference>
<dbReference type="GO" id="GO:0003735">
    <property type="term" value="F:structural constituent of ribosome"/>
    <property type="evidence" value="ECO:0007669"/>
    <property type="project" value="InterPro"/>
</dbReference>
<dbReference type="GO" id="GO:0006412">
    <property type="term" value="P:translation"/>
    <property type="evidence" value="ECO:0007669"/>
    <property type="project" value="UniProtKB-UniRule"/>
</dbReference>
<dbReference type="FunFam" id="2.40.30.10:FF:000004">
    <property type="entry name" value="50S ribosomal protein L3"/>
    <property type="match status" value="1"/>
</dbReference>
<dbReference type="FunFam" id="3.30.160.810:FF:000002">
    <property type="entry name" value="50S ribosomal protein L3"/>
    <property type="match status" value="1"/>
</dbReference>
<dbReference type="Gene3D" id="3.30.160.810">
    <property type="match status" value="1"/>
</dbReference>
<dbReference type="Gene3D" id="2.40.30.10">
    <property type="entry name" value="Translation factors"/>
    <property type="match status" value="1"/>
</dbReference>
<dbReference type="HAMAP" id="MF_01325_B">
    <property type="entry name" value="Ribosomal_uL3_B"/>
    <property type="match status" value="1"/>
</dbReference>
<dbReference type="InterPro" id="IPR000597">
    <property type="entry name" value="Ribosomal_uL3"/>
</dbReference>
<dbReference type="InterPro" id="IPR019927">
    <property type="entry name" value="Ribosomal_uL3_bac/org-type"/>
</dbReference>
<dbReference type="InterPro" id="IPR019926">
    <property type="entry name" value="Ribosomal_uL3_CS"/>
</dbReference>
<dbReference type="InterPro" id="IPR009000">
    <property type="entry name" value="Transl_B-barrel_sf"/>
</dbReference>
<dbReference type="NCBIfam" id="TIGR03625">
    <property type="entry name" value="L3_bact"/>
    <property type="match status" value="1"/>
</dbReference>
<dbReference type="PANTHER" id="PTHR11229">
    <property type="entry name" value="50S RIBOSOMAL PROTEIN L3"/>
    <property type="match status" value="1"/>
</dbReference>
<dbReference type="PANTHER" id="PTHR11229:SF16">
    <property type="entry name" value="LARGE RIBOSOMAL SUBUNIT PROTEIN UL3C"/>
    <property type="match status" value="1"/>
</dbReference>
<dbReference type="Pfam" id="PF00297">
    <property type="entry name" value="Ribosomal_L3"/>
    <property type="match status" value="1"/>
</dbReference>
<dbReference type="SUPFAM" id="SSF50447">
    <property type="entry name" value="Translation proteins"/>
    <property type="match status" value="1"/>
</dbReference>
<dbReference type="PROSITE" id="PS00474">
    <property type="entry name" value="RIBOSOMAL_L3"/>
    <property type="match status" value="1"/>
</dbReference>